<dbReference type="EMBL" id="AJ749949">
    <property type="protein sequence ID" value="CAG45693.1"/>
    <property type="molecule type" value="Genomic_DNA"/>
</dbReference>
<dbReference type="RefSeq" id="WP_003026119.1">
    <property type="nucleotide sequence ID" value="NZ_CP010290.1"/>
</dbReference>
<dbReference type="RefSeq" id="YP_170041.1">
    <property type="nucleotide sequence ID" value="NC_006570.2"/>
</dbReference>
<dbReference type="SMR" id="Q5NG01"/>
<dbReference type="STRING" id="177416.FTT_1060c"/>
<dbReference type="DNASU" id="3192016"/>
<dbReference type="EnsemblBacteria" id="CAG45693">
    <property type="protein sequence ID" value="CAG45693"/>
    <property type="gene ID" value="FTT_1060c"/>
</dbReference>
<dbReference type="KEGG" id="ftu:FTT_1060c"/>
<dbReference type="eggNOG" id="COG0359">
    <property type="taxonomic scope" value="Bacteria"/>
</dbReference>
<dbReference type="OrthoDB" id="9788336at2"/>
<dbReference type="Proteomes" id="UP000001174">
    <property type="component" value="Chromosome"/>
</dbReference>
<dbReference type="GO" id="GO:1990904">
    <property type="term" value="C:ribonucleoprotein complex"/>
    <property type="evidence" value="ECO:0007669"/>
    <property type="project" value="UniProtKB-KW"/>
</dbReference>
<dbReference type="GO" id="GO:0005840">
    <property type="term" value="C:ribosome"/>
    <property type="evidence" value="ECO:0007669"/>
    <property type="project" value="UniProtKB-KW"/>
</dbReference>
<dbReference type="GO" id="GO:0019843">
    <property type="term" value="F:rRNA binding"/>
    <property type="evidence" value="ECO:0007669"/>
    <property type="project" value="UniProtKB-UniRule"/>
</dbReference>
<dbReference type="GO" id="GO:0003735">
    <property type="term" value="F:structural constituent of ribosome"/>
    <property type="evidence" value="ECO:0007669"/>
    <property type="project" value="InterPro"/>
</dbReference>
<dbReference type="GO" id="GO:0006412">
    <property type="term" value="P:translation"/>
    <property type="evidence" value="ECO:0007669"/>
    <property type="project" value="UniProtKB-UniRule"/>
</dbReference>
<dbReference type="Gene3D" id="3.10.430.100">
    <property type="entry name" value="Ribosomal protein L9, C-terminal domain"/>
    <property type="match status" value="1"/>
</dbReference>
<dbReference type="Gene3D" id="3.40.5.10">
    <property type="entry name" value="Ribosomal protein L9, N-terminal domain"/>
    <property type="match status" value="1"/>
</dbReference>
<dbReference type="HAMAP" id="MF_00503">
    <property type="entry name" value="Ribosomal_bL9"/>
    <property type="match status" value="1"/>
</dbReference>
<dbReference type="InterPro" id="IPR000244">
    <property type="entry name" value="Ribosomal_bL9"/>
</dbReference>
<dbReference type="InterPro" id="IPR009027">
    <property type="entry name" value="Ribosomal_bL9/RNase_H1_N"/>
</dbReference>
<dbReference type="InterPro" id="IPR020594">
    <property type="entry name" value="Ribosomal_bL9_bac/chp"/>
</dbReference>
<dbReference type="InterPro" id="IPR020069">
    <property type="entry name" value="Ribosomal_bL9_C"/>
</dbReference>
<dbReference type="InterPro" id="IPR036791">
    <property type="entry name" value="Ribosomal_bL9_C_sf"/>
</dbReference>
<dbReference type="InterPro" id="IPR020070">
    <property type="entry name" value="Ribosomal_bL9_N"/>
</dbReference>
<dbReference type="InterPro" id="IPR036935">
    <property type="entry name" value="Ribosomal_bL9_N_sf"/>
</dbReference>
<dbReference type="NCBIfam" id="TIGR00158">
    <property type="entry name" value="L9"/>
    <property type="match status" value="1"/>
</dbReference>
<dbReference type="PANTHER" id="PTHR21368">
    <property type="entry name" value="50S RIBOSOMAL PROTEIN L9"/>
    <property type="match status" value="1"/>
</dbReference>
<dbReference type="Pfam" id="PF03948">
    <property type="entry name" value="Ribosomal_L9_C"/>
    <property type="match status" value="1"/>
</dbReference>
<dbReference type="Pfam" id="PF01281">
    <property type="entry name" value="Ribosomal_L9_N"/>
    <property type="match status" value="1"/>
</dbReference>
<dbReference type="SUPFAM" id="SSF55658">
    <property type="entry name" value="L9 N-domain-like"/>
    <property type="match status" value="1"/>
</dbReference>
<dbReference type="SUPFAM" id="SSF55653">
    <property type="entry name" value="Ribosomal protein L9 C-domain"/>
    <property type="match status" value="1"/>
</dbReference>
<dbReference type="PROSITE" id="PS00651">
    <property type="entry name" value="RIBOSOMAL_L9"/>
    <property type="match status" value="1"/>
</dbReference>
<gene>
    <name evidence="1" type="primary">rplI</name>
    <name type="ordered locus">FTT_1060c</name>
</gene>
<protein>
    <recommendedName>
        <fullName evidence="1">Large ribosomal subunit protein bL9</fullName>
    </recommendedName>
    <alternativeName>
        <fullName evidence="2">50S ribosomal protein L9</fullName>
    </alternativeName>
</protein>
<comment type="function">
    <text evidence="1">Binds to the 23S rRNA.</text>
</comment>
<comment type="similarity">
    <text evidence="1">Belongs to the bacterial ribosomal protein bL9 family.</text>
</comment>
<organism>
    <name type="scientific">Francisella tularensis subsp. tularensis (strain SCHU S4 / Schu 4)</name>
    <dbReference type="NCBI Taxonomy" id="177416"/>
    <lineage>
        <taxon>Bacteria</taxon>
        <taxon>Pseudomonadati</taxon>
        <taxon>Pseudomonadota</taxon>
        <taxon>Gammaproteobacteria</taxon>
        <taxon>Thiotrichales</taxon>
        <taxon>Francisellaceae</taxon>
        <taxon>Francisella</taxon>
    </lineage>
</organism>
<accession>Q5NG01</accession>
<name>RL9_FRATT</name>
<proteinExistence type="inferred from homology"/>
<feature type="chain" id="PRO_0000236523" description="Large ribosomal subunit protein bL9">
    <location>
        <begin position="1"/>
        <end position="151"/>
    </location>
</feature>
<sequence>MQVILKEKVENLGVLGDIVNVKPGYARNFLIPFGKAVQATQANIKAFEAQKAELEKAEKARFEAAVAVADAIKDKVYTIAAQAGEGGKLFGSVGTAEVAEAVSNQSGKKIEKSQVRMPEGVIRSIGEFELTVHVYTDVDADIKVNVVAAEA</sequence>
<keyword id="KW-1185">Reference proteome</keyword>
<keyword id="KW-0687">Ribonucleoprotein</keyword>
<keyword id="KW-0689">Ribosomal protein</keyword>
<keyword id="KW-0694">RNA-binding</keyword>
<keyword id="KW-0699">rRNA-binding</keyword>
<evidence type="ECO:0000255" key="1">
    <source>
        <dbReference type="HAMAP-Rule" id="MF_00503"/>
    </source>
</evidence>
<evidence type="ECO:0000305" key="2"/>
<reference key="1">
    <citation type="journal article" date="2005" name="Nat. Genet.">
        <title>The complete genome sequence of Francisella tularensis, the causative agent of tularemia.</title>
        <authorList>
            <person name="Larsson P."/>
            <person name="Oyston P.C.F."/>
            <person name="Chain P."/>
            <person name="Chu M.C."/>
            <person name="Duffield M."/>
            <person name="Fuxelius H.-H."/>
            <person name="Garcia E."/>
            <person name="Haelltorp G."/>
            <person name="Johansson D."/>
            <person name="Isherwood K.E."/>
            <person name="Karp P.D."/>
            <person name="Larsson E."/>
            <person name="Liu Y."/>
            <person name="Michell S."/>
            <person name="Prior J."/>
            <person name="Prior R."/>
            <person name="Malfatti S."/>
            <person name="Sjoestedt A."/>
            <person name="Svensson K."/>
            <person name="Thompson N."/>
            <person name="Vergez L."/>
            <person name="Wagg J.K."/>
            <person name="Wren B.W."/>
            <person name="Lindler L.E."/>
            <person name="Andersson S.G.E."/>
            <person name="Forsman M."/>
            <person name="Titball R.W."/>
        </authorList>
    </citation>
    <scope>NUCLEOTIDE SEQUENCE [LARGE SCALE GENOMIC DNA]</scope>
    <source>
        <strain>SCHU S4 / Schu 4</strain>
    </source>
</reference>